<comment type="function">
    <text evidence="1">Catalyzes the oxidation 4-aminobutanal (gamma-aminobutyraldehyde) to 4-aminobutanoate (gamma-aminobutyrate or GABA). This is the second step in one of two pathways for putrescine degradation, where putrescine is converted into 4-aminobutanoate via 4-aminobutanal. Also functions as a 5-aminopentanal dehydrogenase in a a L-lysine degradation pathway to succinate that proceeds via cadaverine, glutarate and L-2-hydroxyglutarate.</text>
</comment>
<comment type="catalytic activity">
    <reaction evidence="1">
        <text>4-aminobutanal + NAD(+) + H2O = 4-aminobutanoate + NADH + 2 H(+)</text>
        <dbReference type="Rhea" id="RHEA:19105"/>
        <dbReference type="ChEBI" id="CHEBI:15377"/>
        <dbReference type="ChEBI" id="CHEBI:15378"/>
        <dbReference type="ChEBI" id="CHEBI:57540"/>
        <dbReference type="ChEBI" id="CHEBI:57945"/>
        <dbReference type="ChEBI" id="CHEBI:58264"/>
        <dbReference type="ChEBI" id="CHEBI:59888"/>
        <dbReference type="EC" id="1.2.1.19"/>
    </reaction>
    <physiologicalReaction direction="left-to-right" evidence="1">
        <dbReference type="Rhea" id="RHEA:19106"/>
    </physiologicalReaction>
</comment>
<comment type="catalytic activity">
    <reaction evidence="1">
        <text>5-aminopentanal + NAD(+) + H2O = 5-aminopentanoate + NADH + 2 H(+)</text>
        <dbReference type="Rhea" id="RHEA:61632"/>
        <dbReference type="ChEBI" id="CHEBI:15377"/>
        <dbReference type="ChEBI" id="CHEBI:15378"/>
        <dbReference type="ChEBI" id="CHEBI:57540"/>
        <dbReference type="ChEBI" id="CHEBI:57945"/>
        <dbReference type="ChEBI" id="CHEBI:144896"/>
        <dbReference type="ChEBI" id="CHEBI:356010"/>
    </reaction>
    <physiologicalReaction direction="left-to-right" evidence="1">
        <dbReference type="Rhea" id="RHEA:61633"/>
    </physiologicalReaction>
</comment>
<comment type="pathway">
    <text evidence="1">Amine and polyamine degradation; putrescine degradation; 4-aminobutanoate from 4-aminobutanal: step 1/1.</text>
</comment>
<comment type="pathway">
    <text evidence="1">Amino-acid degradation.</text>
</comment>
<comment type="subunit">
    <text evidence="1">Homotetramer.</text>
</comment>
<comment type="miscellaneous">
    <text evidence="1">4-aminobutanal can spontaneously cyclize to 1-pyrroline, and 5-aminopentanal to 1-piperideine.</text>
</comment>
<comment type="similarity">
    <text evidence="1">Belongs to the aldehyde dehydrogenase family. Gamma-aminobutyraldehyde dehydrogenase subfamily.</text>
</comment>
<proteinExistence type="inferred from homology"/>
<feature type="chain" id="PRO_0000269693" description="Gamma-aminobutyraldehyde dehydrogenase">
    <location>
        <begin position="1"/>
        <end position="474"/>
    </location>
</feature>
<feature type="active site" evidence="1">
    <location>
        <position position="246"/>
    </location>
</feature>
<feature type="active site" description="Nucleophile" evidence="1">
    <location>
        <position position="280"/>
    </location>
</feature>
<feature type="binding site" evidence="1">
    <location>
        <begin position="146"/>
        <end position="148"/>
    </location>
    <ligand>
        <name>NAD(+)</name>
        <dbReference type="ChEBI" id="CHEBI:57540"/>
    </ligand>
</feature>
<feature type="binding site" evidence="1">
    <location>
        <begin position="172"/>
        <end position="175"/>
    </location>
    <ligand>
        <name>NAD(+)</name>
        <dbReference type="ChEBI" id="CHEBI:57540"/>
    </ligand>
</feature>
<feature type="binding site" evidence="1">
    <location>
        <position position="209"/>
    </location>
    <ligand>
        <name>NAD(+)</name>
        <dbReference type="ChEBI" id="CHEBI:57540"/>
    </ligand>
</feature>
<feature type="binding site" evidence="1">
    <location>
        <begin position="225"/>
        <end position="228"/>
    </location>
    <ligand>
        <name>NAD(+)</name>
        <dbReference type="ChEBI" id="CHEBI:57540"/>
    </ligand>
</feature>
<feature type="binding site" evidence="1">
    <location>
        <position position="280"/>
    </location>
    <ligand>
        <name>NAD(+)</name>
        <dbReference type="ChEBI" id="CHEBI:57540"/>
    </ligand>
</feature>
<name>ABDH_ECOL5</name>
<reference key="1">
    <citation type="journal article" date="2006" name="Mol. Microbiol.">
        <title>Role of pathogenicity island-associated integrases in the genome plasticity of uropathogenic Escherichia coli strain 536.</title>
        <authorList>
            <person name="Hochhut B."/>
            <person name="Wilde C."/>
            <person name="Balling G."/>
            <person name="Middendorf B."/>
            <person name="Dobrindt U."/>
            <person name="Brzuszkiewicz E."/>
            <person name="Gottschalk G."/>
            <person name="Carniel E."/>
            <person name="Hacker J."/>
        </authorList>
    </citation>
    <scope>NUCLEOTIDE SEQUENCE [LARGE SCALE GENOMIC DNA]</scope>
    <source>
        <strain>536 / UPEC</strain>
    </source>
</reference>
<organism>
    <name type="scientific">Escherichia coli O6:K15:H31 (strain 536 / UPEC)</name>
    <dbReference type="NCBI Taxonomy" id="362663"/>
    <lineage>
        <taxon>Bacteria</taxon>
        <taxon>Pseudomonadati</taxon>
        <taxon>Pseudomonadota</taxon>
        <taxon>Gammaproteobacteria</taxon>
        <taxon>Enterobacterales</taxon>
        <taxon>Enterobacteriaceae</taxon>
        <taxon>Escherichia</taxon>
    </lineage>
</organism>
<dbReference type="EC" id="1.2.1.19" evidence="1"/>
<dbReference type="EC" id="1.2.1.-" evidence="1"/>
<dbReference type="EMBL" id="CP000247">
    <property type="protein sequence ID" value="ABG69453.1"/>
    <property type="molecule type" value="Genomic_DNA"/>
</dbReference>
<dbReference type="RefSeq" id="WP_001163909.1">
    <property type="nucleotide sequence ID" value="NC_008253.1"/>
</dbReference>
<dbReference type="SMR" id="Q0THX6"/>
<dbReference type="KEGG" id="ecp:ECP_1446"/>
<dbReference type="HOGENOM" id="CLU_005391_1_0_6"/>
<dbReference type="UniPathway" id="UPA00188">
    <property type="reaction ID" value="UER00292"/>
</dbReference>
<dbReference type="Proteomes" id="UP000009182">
    <property type="component" value="Chromosome"/>
</dbReference>
<dbReference type="GO" id="GO:0019145">
    <property type="term" value="F:aminobutyraldehyde dehydrogenase (NAD+) activity"/>
    <property type="evidence" value="ECO:0007669"/>
    <property type="project" value="UniProtKB-UniRule"/>
</dbReference>
<dbReference type="GO" id="GO:0051287">
    <property type="term" value="F:NAD binding"/>
    <property type="evidence" value="ECO:0007669"/>
    <property type="project" value="UniProtKB-UniRule"/>
</dbReference>
<dbReference type="GO" id="GO:0019477">
    <property type="term" value="P:L-lysine catabolic process"/>
    <property type="evidence" value="ECO:0007669"/>
    <property type="project" value="UniProtKB-UniRule"/>
</dbReference>
<dbReference type="GO" id="GO:0009447">
    <property type="term" value="P:putrescine catabolic process"/>
    <property type="evidence" value="ECO:0007669"/>
    <property type="project" value="UniProtKB-UniRule"/>
</dbReference>
<dbReference type="CDD" id="cd07092">
    <property type="entry name" value="ALDH_ABALDH-YdcW"/>
    <property type="match status" value="1"/>
</dbReference>
<dbReference type="FunFam" id="3.40.605.10:FF:000001">
    <property type="entry name" value="Aldehyde dehydrogenase 1"/>
    <property type="match status" value="1"/>
</dbReference>
<dbReference type="FunFam" id="3.40.309.10:FF:000010">
    <property type="entry name" value="Gamma-aminobutyraldehyde dehydrogenase"/>
    <property type="match status" value="1"/>
</dbReference>
<dbReference type="Gene3D" id="3.40.605.10">
    <property type="entry name" value="Aldehyde Dehydrogenase, Chain A, domain 1"/>
    <property type="match status" value="1"/>
</dbReference>
<dbReference type="Gene3D" id="3.40.309.10">
    <property type="entry name" value="Aldehyde Dehydrogenase, Chain A, domain 2"/>
    <property type="match status" value="1"/>
</dbReference>
<dbReference type="HAMAP" id="MF_01275">
    <property type="entry name" value="Aldedh_Prr"/>
    <property type="match status" value="1"/>
</dbReference>
<dbReference type="InterPro" id="IPR016161">
    <property type="entry name" value="Ald_DH/histidinol_DH"/>
</dbReference>
<dbReference type="InterPro" id="IPR016163">
    <property type="entry name" value="Ald_DH_C"/>
</dbReference>
<dbReference type="InterPro" id="IPR029510">
    <property type="entry name" value="Ald_DH_CS_GLU"/>
</dbReference>
<dbReference type="InterPro" id="IPR016162">
    <property type="entry name" value="Ald_DH_N"/>
</dbReference>
<dbReference type="InterPro" id="IPR015590">
    <property type="entry name" value="Aldehyde_DH_dom"/>
</dbReference>
<dbReference type="InterPro" id="IPR015657">
    <property type="entry name" value="Aminobutyraldehyde_DH"/>
</dbReference>
<dbReference type="InterPro" id="IPR017749">
    <property type="entry name" value="PatD"/>
</dbReference>
<dbReference type="NCBIfam" id="TIGR03374">
    <property type="entry name" value="ABALDH"/>
    <property type="match status" value="1"/>
</dbReference>
<dbReference type="NCBIfam" id="NF010000">
    <property type="entry name" value="PRK13473.1"/>
    <property type="match status" value="1"/>
</dbReference>
<dbReference type="PANTHER" id="PTHR11699">
    <property type="entry name" value="ALDEHYDE DEHYDROGENASE-RELATED"/>
    <property type="match status" value="1"/>
</dbReference>
<dbReference type="Pfam" id="PF00171">
    <property type="entry name" value="Aldedh"/>
    <property type="match status" value="1"/>
</dbReference>
<dbReference type="SUPFAM" id="SSF53720">
    <property type="entry name" value="ALDH-like"/>
    <property type="match status" value="1"/>
</dbReference>
<dbReference type="PROSITE" id="PS00687">
    <property type="entry name" value="ALDEHYDE_DEHYDR_GLU"/>
    <property type="match status" value="1"/>
</dbReference>
<evidence type="ECO:0000255" key="1">
    <source>
        <dbReference type="HAMAP-Rule" id="MF_01275"/>
    </source>
</evidence>
<protein>
    <recommendedName>
        <fullName evidence="1">Gamma-aminobutyraldehyde dehydrogenase</fullName>
        <shortName evidence="1">ABALDH</shortName>
        <ecNumber evidence="1">1.2.1.19</ecNumber>
    </recommendedName>
    <alternativeName>
        <fullName evidence="1">1-pyrroline dehydrogenase</fullName>
    </alternativeName>
    <alternativeName>
        <fullName evidence="1">4-aminobutanal dehydrogenase</fullName>
    </alternativeName>
    <alternativeName>
        <fullName evidence="1">5-aminopentanal dehydrogenase</fullName>
        <ecNumber evidence="1">1.2.1.-</ecNumber>
    </alternativeName>
</protein>
<keyword id="KW-0520">NAD</keyword>
<keyword id="KW-0560">Oxidoreductase</keyword>
<sequence>MQHKLLINGELVSGEGEKQPVYNPATGDVLLEIAEASAEQVNAAVRAADAAFAEWGQTTPKARAECLLKLADVIEENGQVFAELESRNCGKPLHSAFNDEIPAIVDVFRFFAGAARCLNGLAAGEYLEGHTSMIRRDPLGVVASIAPWNYPLMMAAWKLAPALAAGNCVVLKPSEITPLTALKLAELAKDIFPAGVINVLFGRGKTVGDPLTGHPKVRMVSLTGSIATGEHIISHTAPSIKRTHMELGGKAPVIVFDDADIEAVVEGVRTFGYYNAGQDCTAACRIYAQKGIYDTLVEKLGAAVATLKSGSPDDESTELGPLSSLAHLERVSKAVEEAKATGHIKVITGGEKRKGNGYYYAPTLLAGALQDDAIVQKEVFGPVVSVTLFDNEEQVVNWANDSQYGLASSVWTKDVGRAHRVSARLQYGCTWVNTHFMLVSEMPHGGQKLSGYGKDMSLYGLEDYTVVRHVMVKH</sequence>
<gene>
    <name evidence="1" type="primary">patD</name>
    <name type="ordered locus">ECP_1446</name>
</gene>
<accession>Q0THX6</accession>